<evidence type="ECO:0000250" key="1"/>
<evidence type="ECO:0000255" key="2"/>
<evidence type="ECO:0000255" key="3">
    <source>
        <dbReference type="PROSITE-ProRule" id="PRU00159"/>
    </source>
</evidence>
<evidence type="ECO:0000255" key="4">
    <source>
        <dbReference type="PROSITE-ProRule" id="PRU00448"/>
    </source>
</evidence>
<evidence type="ECO:0000255" key="5">
    <source>
        <dbReference type="PROSITE-ProRule" id="PRU10027"/>
    </source>
</evidence>
<evidence type="ECO:0000269" key="6">
    <source>
    </source>
</evidence>
<evidence type="ECO:0000269" key="7">
    <source>
    </source>
</evidence>
<evidence type="ECO:0000269" key="8">
    <source>
    </source>
</evidence>
<evidence type="ECO:0000269" key="9">
    <source>
    </source>
</evidence>
<evidence type="ECO:0000269" key="10">
    <source>
    </source>
</evidence>
<evidence type="ECO:0000303" key="11">
    <source>
    </source>
</evidence>
<evidence type="ECO:0000305" key="12"/>
<comment type="function">
    <text evidence="6 8 9 10">Calcium- and calmodulin-dependent protein kinase necessary and sufficient for dedifferentiation of root cortical cells into nodule initials. Not required for calcium spiking (PubMed:16810257). Acts as central regulator of the nodule organogenesis program. Required for root hair curling and infection thread (IT) formation upon rhizobial infection, and arbuscule formation during arbuscular mycorrhiza (AM) fungal infection. Phosphorylates the downstream target IPD3, a protein required for root infection by symbiotic rhizobia and AM fungi (PubMed:19074278). Phosphorylates the downstream target CIP73, a protein required for root nodule organogenesis (PubMed:21209278). Mediates the phosphorylation of leghemoglobins (e.g. LB1) to modulate their oxygen O(2) affinity, thus regulating the diffusion of oxygen to the bacteroids in nodules (PubMed:25868982).</text>
</comment>
<comment type="catalytic activity">
    <reaction evidence="10">
        <text>L-seryl-[protein] + ATP = O-phospho-L-seryl-[protein] + ADP + H(+)</text>
        <dbReference type="Rhea" id="RHEA:17989"/>
        <dbReference type="Rhea" id="RHEA-COMP:9863"/>
        <dbReference type="Rhea" id="RHEA-COMP:11604"/>
        <dbReference type="ChEBI" id="CHEBI:15378"/>
        <dbReference type="ChEBI" id="CHEBI:29999"/>
        <dbReference type="ChEBI" id="CHEBI:30616"/>
        <dbReference type="ChEBI" id="CHEBI:83421"/>
        <dbReference type="ChEBI" id="CHEBI:456216"/>
        <dbReference type="EC" id="2.7.11.17"/>
    </reaction>
</comment>
<comment type="catalytic activity">
    <reaction evidence="6">
        <text>L-threonyl-[protein] + ATP = O-phospho-L-threonyl-[protein] + ADP + H(+)</text>
        <dbReference type="Rhea" id="RHEA:46608"/>
        <dbReference type="Rhea" id="RHEA-COMP:11060"/>
        <dbReference type="Rhea" id="RHEA-COMP:11605"/>
        <dbReference type="ChEBI" id="CHEBI:15378"/>
        <dbReference type="ChEBI" id="CHEBI:30013"/>
        <dbReference type="ChEBI" id="CHEBI:30616"/>
        <dbReference type="ChEBI" id="CHEBI:61977"/>
        <dbReference type="ChEBI" id="CHEBI:456216"/>
        <dbReference type="EC" id="2.7.11.17"/>
    </reaction>
</comment>
<comment type="activity regulation">
    <text evidence="6">Activated by calcium/calmodulin binding after calcium-induced autophosphorylation.</text>
</comment>
<comment type="subunit">
    <text evidence="8 9">Interacts with IPD3 (PubMed:19074278, PubMed:21209278). Interacts with CIP73 (PubMed:21209278).</text>
</comment>
<comment type="interaction">
    <interactant intactId="EBI-15746225">
        <id>A0AAR7</id>
    </interactant>
    <interactant intactId="EBI-15746220">
        <id>A9XMT3</id>
        <label>IPD3</label>
    </interactant>
    <organismsDiffer>false</organismsDiffer>
    <experiments>4</experiments>
</comment>
<comment type="subcellular location">
    <subcellularLocation>
        <location evidence="8 9">Nucleus</location>
    </subcellularLocation>
</comment>
<comment type="tissue specificity">
    <text evidence="6">Mainly expressed in roots and nodules. Detected in leaves, stems and cotyledons.</text>
</comment>
<comment type="induction">
    <text>Very low up-regulation 8 days after inoculation with bacteria.</text>
</comment>
<comment type="PTM">
    <text evidence="6">Autophosphorylation stimulated by calcium. Occurs probably by an intermolecular mechanism.</text>
</comment>
<comment type="similarity">
    <text evidence="12">Belongs to the protein kinase superfamily. CAMK Ser/Thr protein kinase family. CaMK subfamily.</text>
</comment>
<gene>
    <name evidence="11" type="primary">CCAMK</name>
</gene>
<keyword id="KW-0067">ATP-binding</keyword>
<keyword id="KW-0106">Calcium</keyword>
<keyword id="KW-0112">Calmodulin-binding</keyword>
<keyword id="KW-0175">Coiled coil</keyword>
<keyword id="KW-0418">Kinase</keyword>
<keyword id="KW-0479">Metal-binding</keyword>
<keyword id="KW-0536">Nodulation</keyword>
<keyword id="KW-0547">Nucleotide-binding</keyword>
<keyword id="KW-0539">Nucleus</keyword>
<keyword id="KW-0597">Phosphoprotein</keyword>
<keyword id="KW-0677">Repeat</keyword>
<keyword id="KW-0723">Serine/threonine-protein kinase</keyword>
<keyword id="KW-0808">Transferase</keyword>
<organism>
    <name type="scientific">Lotus japonicus</name>
    <name type="common">Lotus corniculatus var. japonicus</name>
    <dbReference type="NCBI Taxonomy" id="34305"/>
    <lineage>
        <taxon>Eukaryota</taxon>
        <taxon>Viridiplantae</taxon>
        <taxon>Streptophyta</taxon>
        <taxon>Embryophyta</taxon>
        <taxon>Tracheophyta</taxon>
        <taxon>Spermatophyta</taxon>
        <taxon>Magnoliopsida</taxon>
        <taxon>eudicotyledons</taxon>
        <taxon>Gunneridae</taxon>
        <taxon>Pentapetalae</taxon>
        <taxon>rosids</taxon>
        <taxon>fabids</taxon>
        <taxon>Fabales</taxon>
        <taxon>Fabaceae</taxon>
        <taxon>Papilionoideae</taxon>
        <taxon>50 kb inversion clade</taxon>
        <taxon>NPAAA clade</taxon>
        <taxon>Hologalegina</taxon>
        <taxon>robinioid clade</taxon>
        <taxon>Loteae</taxon>
        <taxon>Lotus</taxon>
    </lineage>
</organism>
<feature type="chain" id="PRO_0000395510" description="Calcium and calcium/calmodulin-dependent serine/threonine-protein kinase">
    <location>
        <begin position="1"/>
        <end position="518"/>
    </location>
</feature>
<feature type="domain" description="Protein kinase" evidence="3">
    <location>
        <begin position="13"/>
        <end position="300"/>
    </location>
</feature>
<feature type="domain" description="EF-hand 1" evidence="4">
    <location>
        <begin position="394"/>
        <end position="429"/>
    </location>
</feature>
<feature type="domain" description="EF-hand 2" evidence="4">
    <location>
        <begin position="430"/>
        <end position="465"/>
    </location>
</feature>
<feature type="domain" description="EF-hand 3" evidence="4">
    <location>
        <begin position="472"/>
        <end position="507"/>
    </location>
</feature>
<feature type="region of interest" description="Calmodulin-binding" evidence="1">
    <location>
        <begin position="323"/>
        <end position="336"/>
    </location>
</feature>
<feature type="coiled-coil region" evidence="2">
    <location>
        <begin position="344"/>
        <end position="365"/>
    </location>
</feature>
<feature type="active site" description="Proton acceptor" evidence="3 5">
    <location>
        <position position="165"/>
    </location>
</feature>
<feature type="binding site" evidence="3">
    <location>
        <begin position="19"/>
        <end position="27"/>
    </location>
    <ligand>
        <name>ATP</name>
        <dbReference type="ChEBI" id="CHEBI:30616"/>
    </ligand>
</feature>
<feature type="binding site" evidence="3">
    <location>
        <position position="44"/>
    </location>
    <ligand>
        <name>ATP</name>
        <dbReference type="ChEBI" id="CHEBI:30616"/>
    </ligand>
</feature>
<feature type="binding site" evidence="4">
    <location>
        <position position="407"/>
    </location>
    <ligand>
        <name>Ca(2+)</name>
        <dbReference type="ChEBI" id="CHEBI:29108"/>
        <label>1</label>
    </ligand>
</feature>
<feature type="binding site" evidence="4">
    <location>
        <position position="409"/>
    </location>
    <ligand>
        <name>Ca(2+)</name>
        <dbReference type="ChEBI" id="CHEBI:29108"/>
        <label>1</label>
    </ligand>
</feature>
<feature type="binding site" evidence="4">
    <location>
        <position position="411"/>
    </location>
    <ligand>
        <name>Ca(2+)</name>
        <dbReference type="ChEBI" id="CHEBI:29108"/>
        <label>1</label>
    </ligand>
</feature>
<feature type="binding site" evidence="4">
    <location>
        <position position="413"/>
    </location>
    <ligand>
        <name>Ca(2+)</name>
        <dbReference type="ChEBI" id="CHEBI:29108"/>
        <label>1</label>
    </ligand>
</feature>
<feature type="binding site" evidence="4">
    <location>
        <position position="418"/>
    </location>
    <ligand>
        <name>Ca(2+)</name>
        <dbReference type="ChEBI" id="CHEBI:29108"/>
        <label>1</label>
    </ligand>
</feature>
<feature type="binding site" evidence="4">
    <location>
        <position position="443"/>
    </location>
    <ligand>
        <name>Ca(2+)</name>
        <dbReference type="ChEBI" id="CHEBI:29108"/>
        <label>2</label>
    </ligand>
</feature>
<feature type="binding site" evidence="4">
    <location>
        <position position="445"/>
    </location>
    <ligand>
        <name>Ca(2+)</name>
        <dbReference type="ChEBI" id="CHEBI:29108"/>
        <label>2</label>
    </ligand>
</feature>
<feature type="binding site" evidence="4">
    <location>
        <position position="447"/>
    </location>
    <ligand>
        <name>Ca(2+)</name>
        <dbReference type="ChEBI" id="CHEBI:29108"/>
        <label>2</label>
    </ligand>
</feature>
<feature type="binding site" evidence="4">
    <location>
        <position position="449"/>
    </location>
    <ligand>
        <name>Ca(2+)</name>
        <dbReference type="ChEBI" id="CHEBI:29108"/>
        <label>2</label>
    </ligand>
</feature>
<feature type="binding site" evidence="4">
    <location>
        <position position="454"/>
    </location>
    <ligand>
        <name>Ca(2+)</name>
        <dbReference type="ChEBI" id="CHEBI:29108"/>
        <label>2</label>
    </ligand>
</feature>
<feature type="binding site" evidence="4">
    <location>
        <position position="485"/>
    </location>
    <ligand>
        <name>Ca(2+)</name>
        <dbReference type="ChEBI" id="CHEBI:29108"/>
        <label>3</label>
    </ligand>
</feature>
<feature type="binding site" evidence="4">
    <location>
        <position position="487"/>
    </location>
    <ligand>
        <name>Ca(2+)</name>
        <dbReference type="ChEBI" id="CHEBI:29108"/>
        <label>3</label>
    </ligand>
</feature>
<feature type="binding site" evidence="4">
    <location>
        <position position="489"/>
    </location>
    <ligand>
        <name>Ca(2+)</name>
        <dbReference type="ChEBI" id="CHEBI:29108"/>
        <label>3</label>
    </ligand>
</feature>
<feature type="binding site" evidence="4">
    <location>
        <position position="491"/>
    </location>
    <ligand>
        <name>Ca(2+)</name>
        <dbReference type="ChEBI" id="CHEBI:29108"/>
        <label>3</label>
    </ligand>
</feature>
<feature type="binding site" evidence="4">
    <location>
        <position position="496"/>
    </location>
    <ligand>
        <name>Ca(2+)</name>
        <dbReference type="ChEBI" id="CHEBI:29108"/>
        <label>3</label>
    </ligand>
</feature>
<feature type="modified residue" description="Phosphothreonine" evidence="6">
    <location>
        <position position="265"/>
    </location>
</feature>
<feature type="mutagenesis site" description="In ccamk-4. Loss of function; no nodulation." evidence="6">
    <original>S</original>
    <variation>F</variation>
    <location>
        <position position="25"/>
    </location>
</feature>
<feature type="mutagenesis site" description="In ccamk-3; Loss of autophosphorylation and loss of function; no nodulation. Abolishes binding to IPD3." evidence="6 8">
    <original>G</original>
    <variation>E</variation>
    <location>
        <position position="30"/>
    </location>
</feature>
<feature type="mutagenesis site" description="Loss of catalytic activity. Abolishes binding to IPD3." evidence="8">
    <original>K</original>
    <variation>A</variation>
    <location>
        <position position="44"/>
    </location>
</feature>
<feature type="mutagenesis site" description="Constitutive activity and loss of calcium/calmodulin regulation. Loss of autophosphorylation. Spontaneous nodulation in the absence of rhizobial infection." evidence="6 7">
    <original>T</original>
    <variation>I</variation>
    <variation>D</variation>
    <location>
        <position position="265"/>
    </location>
</feature>
<feature type="sequence conflict" description="In Ref. 2; AFK37664." evidence="12" ref="2">
    <original>K</original>
    <variation>E</variation>
    <location>
        <position position="167"/>
    </location>
</feature>
<feature type="sequence conflict" description="In Ref. 2; AFK37664." evidence="12" ref="2">
    <original>G</original>
    <variation>W</variation>
    <location>
        <position position="238"/>
    </location>
</feature>
<feature type="sequence conflict" description="In Ref. 2; AFK37664." evidence="12" ref="2">
    <original>K</original>
    <variation>E</variation>
    <location>
        <position position="304"/>
    </location>
</feature>
<feature type="sequence conflict" description="In Ref. 2; AFK37664." evidence="12" ref="2">
    <original>I</original>
    <variation>M</variation>
    <location>
        <position position="366"/>
    </location>
</feature>
<feature type="sequence conflict" description="In Ref. 2; AFK37664." evidence="12" ref="2">
    <original>M</original>
    <variation>I</variation>
    <location>
        <position position="390"/>
    </location>
</feature>
<feature type="sequence conflict" description="In Ref. 2; AFK37664." evidence="12" ref="2">
    <original>L</original>
    <variation>F</variation>
    <location>
        <position position="507"/>
    </location>
</feature>
<accession>A0AAR7</accession>
<accession>I3SBM2</accession>
<name>CCAMK_LOTJA</name>
<proteinExistence type="evidence at protein level"/>
<dbReference type="EC" id="2.7.11.17" evidence="6 10"/>
<dbReference type="EMBL" id="AM230792">
    <property type="protein sequence ID" value="CAJ76699.1"/>
    <property type="molecule type" value="Genomic_DNA"/>
</dbReference>
<dbReference type="EMBL" id="AM230793">
    <property type="protein sequence ID" value="CAJ76700.1"/>
    <property type="molecule type" value="mRNA"/>
</dbReference>
<dbReference type="EMBL" id="BT137869">
    <property type="protein sequence ID" value="AFK37664.1"/>
    <property type="molecule type" value="mRNA"/>
</dbReference>
<dbReference type="SMR" id="A0AAR7"/>
<dbReference type="DIP" id="DIP-48655N"/>
<dbReference type="IntAct" id="A0AAR7">
    <property type="interactions" value="1"/>
</dbReference>
<dbReference type="iPTMnet" id="A0AAR7"/>
<dbReference type="OMA" id="QMIMAGE"/>
<dbReference type="OrthoDB" id="40902at2759"/>
<dbReference type="GO" id="GO:0005634">
    <property type="term" value="C:nucleus"/>
    <property type="evidence" value="ECO:0007669"/>
    <property type="project" value="UniProtKB-SubCell"/>
</dbReference>
<dbReference type="GO" id="GO:0005524">
    <property type="term" value="F:ATP binding"/>
    <property type="evidence" value="ECO:0007669"/>
    <property type="project" value="UniProtKB-KW"/>
</dbReference>
<dbReference type="GO" id="GO:0005509">
    <property type="term" value="F:calcium ion binding"/>
    <property type="evidence" value="ECO:0007669"/>
    <property type="project" value="InterPro"/>
</dbReference>
<dbReference type="GO" id="GO:0004683">
    <property type="term" value="F:calcium/calmodulin-dependent protein kinase activity"/>
    <property type="evidence" value="ECO:0000314"/>
    <property type="project" value="UniProtKB"/>
</dbReference>
<dbReference type="GO" id="GO:0005516">
    <property type="term" value="F:calmodulin binding"/>
    <property type="evidence" value="ECO:0007669"/>
    <property type="project" value="UniProtKB-KW"/>
</dbReference>
<dbReference type="GO" id="GO:0106310">
    <property type="term" value="F:protein serine kinase activity"/>
    <property type="evidence" value="ECO:0007669"/>
    <property type="project" value="RHEA"/>
</dbReference>
<dbReference type="GO" id="GO:0009877">
    <property type="term" value="P:nodulation"/>
    <property type="evidence" value="ECO:0007669"/>
    <property type="project" value="UniProtKB-KW"/>
</dbReference>
<dbReference type="GO" id="GO:0009608">
    <property type="term" value="P:response to symbiont"/>
    <property type="evidence" value="ECO:0000314"/>
    <property type="project" value="UniProtKB"/>
</dbReference>
<dbReference type="CDD" id="cd00051">
    <property type="entry name" value="EFh"/>
    <property type="match status" value="2"/>
</dbReference>
<dbReference type="CDD" id="cd05117">
    <property type="entry name" value="STKc_CAMK"/>
    <property type="match status" value="1"/>
</dbReference>
<dbReference type="FunFam" id="1.10.510.10:FF:000610">
    <property type="entry name" value="Calcium and calcium/calmodulin-dependent serine/threonine-protein kinase"/>
    <property type="match status" value="1"/>
</dbReference>
<dbReference type="FunFam" id="3.30.200.20:FF:001144">
    <property type="entry name" value="Calcium and calcium/calmodulin-dependent serine/threonine-protein kinase DMI-3"/>
    <property type="match status" value="1"/>
</dbReference>
<dbReference type="FunFam" id="1.10.238.10:FF:000249">
    <property type="entry name" value="calcium and calcium/calmodulin-dependent serine/threonine-protein kinase DMI-3"/>
    <property type="match status" value="1"/>
</dbReference>
<dbReference type="Gene3D" id="1.10.238.10">
    <property type="entry name" value="EF-hand"/>
    <property type="match status" value="1"/>
</dbReference>
<dbReference type="Gene3D" id="3.30.200.20">
    <property type="entry name" value="Phosphorylase Kinase, domain 1"/>
    <property type="match status" value="1"/>
</dbReference>
<dbReference type="Gene3D" id="1.10.510.10">
    <property type="entry name" value="Transferase(Phosphotransferase) domain 1"/>
    <property type="match status" value="1"/>
</dbReference>
<dbReference type="InterPro" id="IPR050205">
    <property type="entry name" value="CDPK_Ser/Thr_kinases"/>
</dbReference>
<dbReference type="InterPro" id="IPR011992">
    <property type="entry name" value="EF-hand-dom_pair"/>
</dbReference>
<dbReference type="InterPro" id="IPR018247">
    <property type="entry name" value="EF_Hand_1_Ca_BS"/>
</dbReference>
<dbReference type="InterPro" id="IPR002048">
    <property type="entry name" value="EF_hand_dom"/>
</dbReference>
<dbReference type="InterPro" id="IPR011009">
    <property type="entry name" value="Kinase-like_dom_sf"/>
</dbReference>
<dbReference type="InterPro" id="IPR000719">
    <property type="entry name" value="Prot_kinase_dom"/>
</dbReference>
<dbReference type="InterPro" id="IPR017441">
    <property type="entry name" value="Protein_kinase_ATP_BS"/>
</dbReference>
<dbReference type="InterPro" id="IPR008271">
    <property type="entry name" value="Ser/Thr_kinase_AS"/>
</dbReference>
<dbReference type="PANTHER" id="PTHR24349">
    <property type="entry name" value="SERINE/THREONINE-PROTEIN KINASE"/>
    <property type="match status" value="1"/>
</dbReference>
<dbReference type="Pfam" id="PF13202">
    <property type="entry name" value="EF-hand_5"/>
    <property type="match status" value="1"/>
</dbReference>
<dbReference type="Pfam" id="PF13499">
    <property type="entry name" value="EF-hand_7"/>
    <property type="match status" value="1"/>
</dbReference>
<dbReference type="Pfam" id="PF00069">
    <property type="entry name" value="Pkinase"/>
    <property type="match status" value="1"/>
</dbReference>
<dbReference type="PRINTS" id="PR00450">
    <property type="entry name" value="RECOVERIN"/>
</dbReference>
<dbReference type="SMART" id="SM00054">
    <property type="entry name" value="EFh"/>
    <property type="match status" value="3"/>
</dbReference>
<dbReference type="SMART" id="SM00220">
    <property type="entry name" value="S_TKc"/>
    <property type="match status" value="1"/>
</dbReference>
<dbReference type="SUPFAM" id="SSF47473">
    <property type="entry name" value="EF-hand"/>
    <property type="match status" value="1"/>
</dbReference>
<dbReference type="SUPFAM" id="SSF56112">
    <property type="entry name" value="Protein kinase-like (PK-like)"/>
    <property type="match status" value="1"/>
</dbReference>
<dbReference type="PROSITE" id="PS00018">
    <property type="entry name" value="EF_HAND_1"/>
    <property type="match status" value="3"/>
</dbReference>
<dbReference type="PROSITE" id="PS50222">
    <property type="entry name" value="EF_HAND_2"/>
    <property type="match status" value="3"/>
</dbReference>
<dbReference type="PROSITE" id="PS00107">
    <property type="entry name" value="PROTEIN_KINASE_ATP"/>
    <property type="match status" value="1"/>
</dbReference>
<dbReference type="PROSITE" id="PS50011">
    <property type="entry name" value="PROTEIN_KINASE_DOM"/>
    <property type="match status" value="1"/>
</dbReference>
<dbReference type="PROSITE" id="PS00108">
    <property type="entry name" value="PROTEIN_KINASE_ST"/>
    <property type="match status" value="1"/>
</dbReference>
<sequence length="518" mass="57480">MGYDQTRKLSDEYEISEILGRGGFSVVRKGTKKSGNEKTQVAIKTLRRLGSSPSGTGGGQKSTATVMGFPSLRQVSVSDALLTNEILVMRRIVENVSPHPNVIDLYDVCEDSNGVHLVLELCSGGELFDRIVAQDKYAETEAAAVVRQIAAGLEAVHKADIVHRDLKPENCLFLDSRKDSPLKIMDFGLSSVEEFTDPVVGLFGSIDYVSPEALSQGKITAKSDMWSLGVILYILLSGYPPFIAQNNRQKQQMIINGNFSFYEKTWKGITQSAKQLISSLLTVDPSKRPSAQELLSHPWVRGDKAKDEQMDPEIVSRLQSFNARRKLRAAAIASVWSSTIFLRTKKLRSLVGTYDLKEEEIESLRIHFKKICGNGDNATLSEFVEVLKAMKMPSLIPLAPRIFDLFDNNRDGTIDMREILCGFSSLKNSKGDDALRLCFQMYDTDRSGCITKEEVASMLCALPEECLPADITEPGKLDEIFDLMDANSDGKVTFEEFKAAMQRDSSLQDMLLSSLRPS</sequence>
<protein>
    <recommendedName>
        <fullName evidence="11">Calcium and calcium/calmodulin-dependent serine/threonine-protein kinase</fullName>
        <shortName evidence="11">LjCCaMK</shortName>
        <ecNumber evidence="6 10">2.7.11.17</ecNumber>
    </recommendedName>
</protein>
<reference key="1">
    <citation type="journal article" date="2006" name="Nature">
        <title>Deregulation of a Ca2+/calmodulin-dependent kinase leads to spontaneous nodule development.</title>
        <authorList>
            <person name="Tirichine L."/>
            <person name="Imaizumi-Anraku H."/>
            <person name="Murakami Y."/>
            <person name="Yoshida S."/>
            <person name="Madsen L.H."/>
            <person name="Miwa H."/>
            <person name="Nakagawa T."/>
            <person name="Sandal N."/>
            <person name="Albrektsen A.S."/>
            <person name="Kawaguchi M."/>
            <person name="Downie A."/>
            <person name="Sato S."/>
            <person name="Tabata S."/>
            <person name="Kouchi H."/>
            <person name="Parniske M."/>
            <person name="Kawasaki S."/>
            <person name="Stougaard J."/>
        </authorList>
    </citation>
    <scope>NUCLEOTIDE SEQUENCE [GENOMIC DNA / MRNA]</scope>
    <scope>FUNCTION</scope>
    <scope>MUTAGENESIS OF SER-25; GLY-30 AND THR-265</scope>
    <scope>PHOSPHORYLATION AT THR-265</scope>
    <scope>TISSUE SPECIFICITY</scope>
    <scope>ACTIVITY REGULATION</scope>
    <scope>CATALYTIC ACTIVITY</scope>
</reference>
<reference key="2">
    <citation type="submission" date="2012-05" db="EMBL/GenBank/DDBJ databases">
        <authorList>
            <person name="Krishnakumar V."/>
            <person name="Cheung F."/>
            <person name="Xiao Y."/>
            <person name="Chan A."/>
            <person name="Moskal W.A."/>
            <person name="Town C.D."/>
        </authorList>
    </citation>
    <scope>NUCLEOTIDE SEQUENCE [MRNA]</scope>
</reference>
<reference key="3">
    <citation type="journal article" date="2008" name="Plant Cell Physiol.">
        <title>Divergence of evolutionary ways among common sym genes: CASTOR and CCaMK show functional conservation between two symbiosis systems and constitute the root of a common signaling pathway.</title>
        <authorList>
            <person name="Banba M."/>
            <person name="Gutjahr C."/>
            <person name="Miyao A."/>
            <person name="Hirochika H."/>
            <person name="Paszkowski U."/>
            <person name="Kouchi H."/>
            <person name="Imaizumi-Anraku H."/>
        </authorList>
    </citation>
    <scope>MUTAGENESIS OF THR-265</scope>
</reference>
<reference key="4">
    <citation type="journal article" date="2008" name="Proc. Natl. Acad. Sci. U.S.A.">
        <title>CYCLOPS, a mediator of symbiotic intracellular accommodation.</title>
        <authorList>
            <person name="Yano K."/>
            <person name="Yoshida S."/>
            <person name="Mueller J."/>
            <person name="Singh S."/>
            <person name="Banba M."/>
            <person name="Vickers K."/>
            <person name="Markmann K."/>
            <person name="White C."/>
            <person name="Schuller B."/>
            <person name="Sato S."/>
            <person name="Asamizu E."/>
            <person name="Tabata S."/>
            <person name="Murooka Y."/>
            <person name="Perry J."/>
            <person name="Wang T.L."/>
            <person name="Kawaguchi M."/>
            <person name="Imaizumi-Anraku H."/>
            <person name="Hayashi M."/>
            <person name="Parniske M."/>
        </authorList>
    </citation>
    <scope>FUNCTION</scope>
    <scope>INTERACTION WITH IPD3</scope>
    <scope>SUBCELLULAR LOCATION</scope>
    <scope>MUTAGENESIS OF GLY-30 AND LYS-44</scope>
</reference>
<reference key="5">
    <citation type="journal article" date="2011" name="Plant Physiol.">
        <title>A novel interaction between CCaMK and a protein containing the Scythe_N ubiquitin-like domain in Lotus japonicus.</title>
        <authorList>
            <person name="Kang H."/>
            <person name="Zhu H."/>
            <person name="Chu X."/>
            <person name="Yang Z."/>
            <person name="Yuan S."/>
            <person name="Yu D."/>
            <person name="Wang C."/>
            <person name="Hong Z."/>
            <person name="Zhang Z."/>
        </authorList>
    </citation>
    <scope>FUNCTION</scope>
    <scope>INTERACTION WITH CIP73 AND IPD3</scope>
    <scope>SUBCELLULAR LOCATION</scope>
</reference>
<reference key="6">
    <citation type="journal article" date="2015" name="Protein J.">
        <title>Phosphorylation of leghemoglobin at S45 is most effective to disrupt the molecular environment of its oxygen binding pocket.</title>
        <authorList>
            <person name="Bhar K."/>
            <person name="Maity A."/>
            <person name="Ghosh A."/>
            <person name="Das T."/>
            <person name="Dastidar S.G."/>
            <person name="Siddhanta A."/>
        </authorList>
    </citation>
    <scope>FUNCTION</scope>
    <scope>CATALYTIC ACTIVITY</scope>
</reference>